<feature type="chain" id="PRO_0000360446" description="UPF0749 protein YlxX">
    <location>
        <begin position="1"/>
        <end position="235"/>
    </location>
</feature>
<feature type="transmembrane region" description="Helical" evidence="1">
    <location>
        <begin position="6"/>
        <end position="26"/>
    </location>
</feature>
<protein>
    <recommendedName>
        <fullName>UPF0749 protein YlxX</fullName>
    </recommendedName>
</protein>
<sequence length="235" mass="26476">MKIKRSFISISVLMVIFGLMISVQFNSLKHPKVRDTRDMWDIREELTSEQKKQEKLLAEINKYDKLLNSYSQTKEMTKETALNNTLQSLKKTAGMTDITGSGIVITISPLFSESLTGEPIENPPPDLLKKLINELNSYGAEHISINERRVVNHTVIRDINGTTKIDGYALDDYPLTVKVLAKDPDMLHSRVKGSGLEDLFASENLALKAGKSESKLTLKAYDRPLDVQQLKLLKD</sequence>
<organism>
    <name type="scientific">Bacillus subtilis (strain 168)</name>
    <dbReference type="NCBI Taxonomy" id="224308"/>
    <lineage>
        <taxon>Bacteria</taxon>
        <taxon>Bacillati</taxon>
        <taxon>Bacillota</taxon>
        <taxon>Bacilli</taxon>
        <taxon>Bacillales</taxon>
        <taxon>Bacillaceae</taxon>
        <taxon>Bacillus</taxon>
    </lineage>
</organism>
<proteinExistence type="inferred from homology"/>
<reference key="1">
    <citation type="journal article" date="1997" name="Nature">
        <title>The complete genome sequence of the Gram-positive bacterium Bacillus subtilis.</title>
        <authorList>
            <person name="Kunst F."/>
            <person name="Ogasawara N."/>
            <person name="Moszer I."/>
            <person name="Albertini A.M."/>
            <person name="Alloni G."/>
            <person name="Azevedo V."/>
            <person name="Bertero M.G."/>
            <person name="Bessieres P."/>
            <person name="Bolotin A."/>
            <person name="Borchert S."/>
            <person name="Borriss R."/>
            <person name="Boursier L."/>
            <person name="Brans A."/>
            <person name="Braun M."/>
            <person name="Brignell S.C."/>
            <person name="Bron S."/>
            <person name="Brouillet S."/>
            <person name="Bruschi C.V."/>
            <person name="Caldwell B."/>
            <person name="Capuano V."/>
            <person name="Carter N.M."/>
            <person name="Choi S.-K."/>
            <person name="Codani J.-J."/>
            <person name="Connerton I.F."/>
            <person name="Cummings N.J."/>
            <person name="Daniel R.A."/>
            <person name="Denizot F."/>
            <person name="Devine K.M."/>
            <person name="Duesterhoeft A."/>
            <person name="Ehrlich S.D."/>
            <person name="Emmerson P.T."/>
            <person name="Entian K.-D."/>
            <person name="Errington J."/>
            <person name="Fabret C."/>
            <person name="Ferrari E."/>
            <person name="Foulger D."/>
            <person name="Fritz C."/>
            <person name="Fujita M."/>
            <person name="Fujita Y."/>
            <person name="Fuma S."/>
            <person name="Galizzi A."/>
            <person name="Galleron N."/>
            <person name="Ghim S.-Y."/>
            <person name="Glaser P."/>
            <person name="Goffeau A."/>
            <person name="Golightly E.J."/>
            <person name="Grandi G."/>
            <person name="Guiseppi G."/>
            <person name="Guy B.J."/>
            <person name="Haga K."/>
            <person name="Haiech J."/>
            <person name="Harwood C.R."/>
            <person name="Henaut A."/>
            <person name="Hilbert H."/>
            <person name="Holsappel S."/>
            <person name="Hosono S."/>
            <person name="Hullo M.-F."/>
            <person name="Itaya M."/>
            <person name="Jones L.-M."/>
            <person name="Joris B."/>
            <person name="Karamata D."/>
            <person name="Kasahara Y."/>
            <person name="Klaerr-Blanchard M."/>
            <person name="Klein C."/>
            <person name="Kobayashi Y."/>
            <person name="Koetter P."/>
            <person name="Koningstein G."/>
            <person name="Krogh S."/>
            <person name="Kumano M."/>
            <person name="Kurita K."/>
            <person name="Lapidus A."/>
            <person name="Lardinois S."/>
            <person name="Lauber J."/>
            <person name="Lazarevic V."/>
            <person name="Lee S.-M."/>
            <person name="Levine A."/>
            <person name="Liu H."/>
            <person name="Masuda S."/>
            <person name="Mauel C."/>
            <person name="Medigue C."/>
            <person name="Medina N."/>
            <person name="Mellado R.P."/>
            <person name="Mizuno M."/>
            <person name="Moestl D."/>
            <person name="Nakai S."/>
            <person name="Noback M."/>
            <person name="Noone D."/>
            <person name="O'Reilly M."/>
            <person name="Ogawa K."/>
            <person name="Ogiwara A."/>
            <person name="Oudega B."/>
            <person name="Park S.-H."/>
            <person name="Parro V."/>
            <person name="Pohl T.M."/>
            <person name="Portetelle D."/>
            <person name="Porwollik S."/>
            <person name="Prescott A.M."/>
            <person name="Presecan E."/>
            <person name="Pujic P."/>
            <person name="Purnelle B."/>
            <person name="Rapoport G."/>
            <person name="Rey M."/>
            <person name="Reynolds S."/>
            <person name="Rieger M."/>
            <person name="Rivolta C."/>
            <person name="Rocha E."/>
            <person name="Roche B."/>
            <person name="Rose M."/>
            <person name="Sadaie Y."/>
            <person name="Sato T."/>
            <person name="Scanlan E."/>
            <person name="Schleich S."/>
            <person name="Schroeter R."/>
            <person name="Scoffone F."/>
            <person name="Sekiguchi J."/>
            <person name="Sekowska A."/>
            <person name="Seror S.J."/>
            <person name="Serror P."/>
            <person name="Shin B.-S."/>
            <person name="Soldo B."/>
            <person name="Sorokin A."/>
            <person name="Tacconi E."/>
            <person name="Takagi T."/>
            <person name="Takahashi H."/>
            <person name="Takemaru K."/>
            <person name="Takeuchi M."/>
            <person name="Tamakoshi A."/>
            <person name="Tanaka T."/>
            <person name="Terpstra P."/>
            <person name="Tognoni A."/>
            <person name="Tosato V."/>
            <person name="Uchiyama S."/>
            <person name="Vandenbol M."/>
            <person name="Vannier F."/>
            <person name="Vassarotti A."/>
            <person name="Viari A."/>
            <person name="Wambutt R."/>
            <person name="Wedler E."/>
            <person name="Wedler H."/>
            <person name="Weitzenegger T."/>
            <person name="Winters P."/>
            <person name="Wipat A."/>
            <person name="Yamamoto H."/>
            <person name="Yamane K."/>
            <person name="Yasumoto K."/>
            <person name="Yata K."/>
            <person name="Yoshida K."/>
            <person name="Yoshikawa H.-F."/>
            <person name="Zumstein E."/>
            <person name="Yoshikawa H."/>
            <person name="Danchin A."/>
        </authorList>
    </citation>
    <scope>NUCLEOTIDE SEQUENCE [LARGE SCALE GENOMIC DNA]</scope>
    <source>
        <strain>168</strain>
    </source>
</reference>
<reference key="2">
    <citation type="journal article" date="2009" name="Microbiology">
        <title>From a consortium sequence to a unified sequence: the Bacillus subtilis 168 reference genome a decade later.</title>
        <authorList>
            <person name="Barbe V."/>
            <person name="Cruveiller S."/>
            <person name="Kunst F."/>
            <person name="Lenoble P."/>
            <person name="Meurice G."/>
            <person name="Sekowska A."/>
            <person name="Vallenet D."/>
            <person name="Wang T."/>
            <person name="Moszer I."/>
            <person name="Medigue C."/>
            <person name="Danchin A."/>
        </authorList>
    </citation>
    <scope>SEQUENCE REVISION TO 66-67</scope>
</reference>
<gene>
    <name type="primary">ylxX</name>
    <name type="ordered locus">BSU15260</name>
</gene>
<comment type="subcellular location">
    <subcellularLocation>
        <location evidence="2">Cell membrane</location>
        <topology evidence="2">Single-pass membrane protein</topology>
    </subcellularLocation>
</comment>
<comment type="similarity">
    <text evidence="2">Belongs to the UPF0749 family.</text>
</comment>
<keyword id="KW-1003">Cell membrane</keyword>
<keyword id="KW-0472">Membrane</keyword>
<keyword id="KW-1185">Reference proteome</keyword>
<keyword id="KW-0812">Transmembrane</keyword>
<keyword id="KW-1133">Transmembrane helix</keyword>
<dbReference type="EMBL" id="AL009126">
    <property type="protein sequence ID" value="CAB13399.2"/>
    <property type="molecule type" value="Genomic_DNA"/>
</dbReference>
<dbReference type="PIR" id="G69882">
    <property type="entry name" value="G69882"/>
</dbReference>
<dbReference type="RefSeq" id="NP_389409.2">
    <property type="nucleotide sequence ID" value="NC_000964.3"/>
</dbReference>
<dbReference type="RefSeq" id="WP_009967184.1">
    <property type="nucleotide sequence ID" value="NZ_OZ025638.1"/>
</dbReference>
<dbReference type="SMR" id="Q45544"/>
<dbReference type="FunCoup" id="Q45544">
    <property type="interactions" value="19"/>
</dbReference>
<dbReference type="STRING" id="224308.BSU15260"/>
<dbReference type="PaxDb" id="224308-BSU15260"/>
<dbReference type="EnsemblBacteria" id="CAB13399">
    <property type="protein sequence ID" value="CAB13399"/>
    <property type="gene ID" value="BSU_15260"/>
</dbReference>
<dbReference type="GeneID" id="936107"/>
<dbReference type="KEGG" id="bsu:BSU15260"/>
<dbReference type="PATRIC" id="fig|224308.179.peg.1664"/>
<dbReference type="eggNOG" id="COG3879">
    <property type="taxonomic scope" value="Bacteria"/>
</dbReference>
<dbReference type="InParanoid" id="Q45544"/>
<dbReference type="OrthoDB" id="2439649at2"/>
<dbReference type="PhylomeDB" id="Q45544"/>
<dbReference type="BioCyc" id="BSUB:BSU15260-MONOMER"/>
<dbReference type="Proteomes" id="UP000001570">
    <property type="component" value="Chromosome"/>
</dbReference>
<dbReference type="GO" id="GO:0005886">
    <property type="term" value="C:plasma membrane"/>
    <property type="evidence" value="ECO:0007669"/>
    <property type="project" value="UniProtKB-SubCell"/>
</dbReference>
<dbReference type="Gene3D" id="3.30.70.1880">
    <property type="entry name" value="Protein of unknown function DUF881"/>
    <property type="match status" value="1"/>
</dbReference>
<dbReference type="InterPro" id="IPR010273">
    <property type="entry name" value="DUF881"/>
</dbReference>
<dbReference type="PANTHER" id="PTHR37313">
    <property type="entry name" value="UPF0749 PROTEIN RV1825"/>
    <property type="match status" value="1"/>
</dbReference>
<dbReference type="PANTHER" id="PTHR37313:SF2">
    <property type="entry name" value="UPF0749 PROTEIN YLXX"/>
    <property type="match status" value="1"/>
</dbReference>
<dbReference type="Pfam" id="PF05949">
    <property type="entry name" value="DUF881"/>
    <property type="match status" value="1"/>
</dbReference>
<accession>Q45544</accession>
<name>YLXX_BACSU</name>
<evidence type="ECO:0000255" key="1"/>
<evidence type="ECO:0000305" key="2"/>